<evidence type="ECO:0000255" key="1">
    <source>
        <dbReference type="HAMAP-Rule" id="MF_00600"/>
    </source>
</evidence>
<evidence type="ECO:0000305" key="2"/>
<dbReference type="EC" id="5.6.1.7" evidence="1"/>
<dbReference type="EMBL" id="BA000040">
    <property type="protein sequence ID" value="BAC48948.1"/>
    <property type="molecule type" value="Genomic_DNA"/>
</dbReference>
<dbReference type="RefSeq" id="NP_770323.1">
    <property type="nucleotide sequence ID" value="NC_004463.1"/>
</dbReference>
<dbReference type="RefSeq" id="WP_011086464.1">
    <property type="nucleotide sequence ID" value="NC_004463.1"/>
</dbReference>
<dbReference type="SMR" id="Q89P00"/>
<dbReference type="STRING" id="224911.AAV28_15415"/>
<dbReference type="EnsemblBacteria" id="BAC48948">
    <property type="protein sequence ID" value="BAC48948"/>
    <property type="gene ID" value="BAC48948"/>
</dbReference>
<dbReference type="GeneID" id="46490695"/>
<dbReference type="KEGG" id="bja:blr3683"/>
<dbReference type="PATRIC" id="fig|224911.44.peg.3347"/>
<dbReference type="eggNOG" id="COG0459">
    <property type="taxonomic scope" value="Bacteria"/>
</dbReference>
<dbReference type="HOGENOM" id="CLU_016503_3_0_5"/>
<dbReference type="InParanoid" id="Q89P00"/>
<dbReference type="OrthoDB" id="9766614at2"/>
<dbReference type="PhylomeDB" id="Q89P00"/>
<dbReference type="Proteomes" id="UP000002526">
    <property type="component" value="Chromosome"/>
</dbReference>
<dbReference type="GO" id="GO:1990220">
    <property type="term" value="C:GroEL-GroES complex"/>
    <property type="evidence" value="ECO:0000318"/>
    <property type="project" value="GO_Central"/>
</dbReference>
<dbReference type="GO" id="GO:0005524">
    <property type="term" value="F:ATP binding"/>
    <property type="evidence" value="ECO:0000318"/>
    <property type="project" value="GO_Central"/>
</dbReference>
<dbReference type="GO" id="GO:0140662">
    <property type="term" value="F:ATP-dependent protein folding chaperone"/>
    <property type="evidence" value="ECO:0007669"/>
    <property type="project" value="InterPro"/>
</dbReference>
<dbReference type="GO" id="GO:0016853">
    <property type="term" value="F:isomerase activity"/>
    <property type="evidence" value="ECO:0007669"/>
    <property type="project" value="UniProtKB-KW"/>
</dbReference>
<dbReference type="GO" id="GO:0051082">
    <property type="term" value="F:unfolded protein binding"/>
    <property type="evidence" value="ECO:0000318"/>
    <property type="project" value="GO_Central"/>
</dbReference>
<dbReference type="GO" id="GO:0051085">
    <property type="term" value="P:chaperone cofactor-dependent protein refolding"/>
    <property type="evidence" value="ECO:0000318"/>
    <property type="project" value="GO_Central"/>
</dbReference>
<dbReference type="GO" id="GO:0042026">
    <property type="term" value="P:protein refolding"/>
    <property type="evidence" value="ECO:0007669"/>
    <property type="project" value="InterPro"/>
</dbReference>
<dbReference type="GO" id="GO:0009408">
    <property type="term" value="P:response to heat"/>
    <property type="evidence" value="ECO:0000318"/>
    <property type="project" value="GO_Central"/>
</dbReference>
<dbReference type="CDD" id="cd03344">
    <property type="entry name" value="GroEL"/>
    <property type="match status" value="1"/>
</dbReference>
<dbReference type="FunFam" id="3.50.7.10:FF:000001">
    <property type="entry name" value="60 kDa chaperonin"/>
    <property type="match status" value="1"/>
</dbReference>
<dbReference type="Gene3D" id="3.50.7.10">
    <property type="entry name" value="GroEL"/>
    <property type="match status" value="1"/>
</dbReference>
<dbReference type="Gene3D" id="1.10.560.10">
    <property type="entry name" value="GroEL-like equatorial domain"/>
    <property type="match status" value="1"/>
</dbReference>
<dbReference type="Gene3D" id="3.30.260.10">
    <property type="entry name" value="TCP-1-like chaperonin intermediate domain"/>
    <property type="match status" value="1"/>
</dbReference>
<dbReference type="InterPro" id="IPR018370">
    <property type="entry name" value="Chaperonin_Cpn60_CS"/>
</dbReference>
<dbReference type="InterPro" id="IPR001844">
    <property type="entry name" value="Cpn60/GroEL"/>
</dbReference>
<dbReference type="InterPro" id="IPR002423">
    <property type="entry name" value="Cpn60/GroEL/TCP-1"/>
</dbReference>
<dbReference type="InterPro" id="IPR027409">
    <property type="entry name" value="GroEL-like_apical_dom_sf"/>
</dbReference>
<dbReference type="InterPro" id="IPR027413">
    <property type="entry name" value="GROEL-like_equatorial_sf"/>
</dbReference>
<dbReference type="InterPro" id="IPR027410">
    <property type="entry name" value="TCP-1-like_intermed_sf"/>
</dbReference>
<dbReference type="NCBIfam" id="NF000592">
    <property type="entry name" value="PRK00013.1"/>
    <property type="match status" value="1"/>
</dbReference>
<dbReference type="NCBIfam" id="NF009487">
    <property type="entry name" value="PRK12849.1"/>
    <property type="match status" value="1"/>
</dbReference>
<dbReference type="NCBIfam" id="NF009488">
    <property type="entry name" value="PRK12850.1"/>
    <property type="match status" value="1"/>
</dbReference>
<dbReference type="NCBIfam" id="NF009489">
    <property type="entry name" value="PRK12851.1"/>
    <property type="match status" value="1"/>
</dbReference>
<dbReference type="PANTHER" id="PTHR45633">
    <property type="entry name" value="60 KDA HEAT SHOCK PROTEIN, MITOCHONDRIAL"/>
    <property type="match status" value="1"/>
</dbReference>
<dbReference type="Pfam" id="PF00118">
    <property type="entry name" value="Cpn60_TCP1"/>
    <property type="match status" value="1"/>
</dbReference>
<dbReference type="PRINTS" id="PR00298">
    <property type="entry name" value="CHAPERONIN60"/>
</dbReference>
<dbReference type="SUPFAM" id="SSF52029">
    <property type="entry name" value="GroEL apical domain-like"/>
    <property type="match status" value="1"/>
</dbReference>
<dbReference type="SUPFAM" id="SSF48592">
    <property type="entry name" value="GroEL equatorial domain-like"/>
    <property type="match status" value="1"/>
</dbReference>
<dbReference type="SUPFAM" id="SSF54849">
    <property type="entry name" value="GroEL-intermediate domain like"/>
    <property type="match status" value="1"/>
</dbReference>
<dbReference type="PROSITE" id="PS00296">
    <property type="entry name" value="CHAPERONINS_CPN60"/>
    <property type="match status" value="1"/>
</dbReference>
<gene>
    <name evidence="1" type="primary">groEL4</name>
    <name type="synonym">groEL</name>
    <name evidence="1" type="synonym">groL4</name>
    <name type="ordered locus">blr3683</name>
</gene>
<name>CH604_BRADU</name>
<sequence length="543" mass="56659">MPKVLLHDIEARRALARGVQKLAAAIESTLGPKGMNAMVDRPIGTPIVSRDGVTIASEIELPDRFENMGAQVVREVSMQTNEVAGDGTTTAMVLANGLIQGGVAALERGAKAVDLCKGIDRAVEVVVESLKSAAIPVSDRRTLQAVATIASTDSHLGDLIAEAVERVGKDGIISSDYGLTTSTTLEVVEGMSFDRGYISHHMVTDVEKMEVVLEQPYILLTDLKIKAPGELAAVRARVAETGKPLVIVAEEIAPEVVVTLLGEGNRGKVLVVNPPDYGHWRKAMMDDLAIITGGRVIARELGGMLEEASLADLGTARQVRASARETVIIRGGGDDAAIAARRQQVAKQHDLAPPNIEQDKLKERLAKLSGGTAVIFAGGVTPVEQKRTIQLIDDALSAARAAAEEGIVPGGGTALAQCAPVVVRALGNINGDLGEGIKLVRETLSRPAAFIARNAGHDAAKVVAELQSSRAGVGFDAANGVFIDMVSAGIVDPVRVTYTALRNAASVATLVLTTNTLVADVPEYVDPTQGPALGGGAEKLGRA</sequence>
<accession>Q89P00</accession>
<keyword id="KW-0067">ATP-binding</keyword>
<keyword id="KW-0143">Chaperone</keyword>
<keyword id="KW-0963">Cytoplasm</keyword>
<keyword id="KW-0413">Isomerase</keyword>
<keyword id="KW-0547">Nucleotide-binding</keyword>
<keyword id="KW-1185">Reference proteome</keyword>
<reference key="1">
    <citation type="journal article" date="2002" name="DNA Res.">
        <title>Complete genomic sequence of nitrogen-fixing symbiotic bacterium Bradyrhizobium japonicum USDA110.</title>
        <authorList>
            <person name="Kaneko T."/>
            <person name="Nakamura Y."/>
            <person name="Sato S."/>
            <person name="Minamisawa K."/>
            <person name="Uchiumi T."/>
            <person name="Sasamoto S."/>
            <person name="Watanabe A."/>
            <person name="Idesawa K."/>
            <person name="Iriguchi M."/>
            <person name="Kawashima K."/>
            <person name="Kohara M."/>
            <person name="Matsumoto M."/>
            <person name="Shimpo S."/>
            <person name="Tsuruoka H."/>
            <person name="Wada T."/>
            <person name="Yamada M."/>
            <person name="Tabata S."/>
        </authorList>
    </citation>
    <scope>NUCLEOTIDE SEQUENCE [LARGE SCALE GENOMIC DNA]</scope>
    <source>
        <strain>JCM 10833 / BCRC 13528 / IAM 13628 / NBRC 14792 / USDA 110</strain>
    </source>
</reference>
<protein>
    <recommendedName>
        <fullName evidence="1">Chaperonin GroEL 4</fullName>
        <ecNumber evidence="1">5.6.1.7</ecNumber>
    </recommendedName>
    <alternativeName>
        <fullName evidence="1">60 kDa chaperonin 4</fullName>
    </alternativeName>
    <alternativeName>
        <fullName evidence="1">Chaperonin-60 4</fullName>
        <shortName evidence="1">Cpn60 4</shortName>
    </alternativeName>
</protein>
<comment type="function">
    <text evidence="1">Together with its co-chaperonin GroES, plays an essential role in assisting protein folding. The GroEL-GroES system forms a nano-cage that allows encapsulation of the non-native substrate proteins and provides a physical environment optimized to promote and accelerate protein folding.</text>
</comment>
<comment type="catalytic activity">
    <reaction evidence="1">
        <text>ATP + H2O + a folded polypeptide = ADP + phosphate + an unfolded polypeptide.</text>
        <dbReference type="EC" id="5.6.1.7"/>
    </reaction>
</comment>
<comment type="subunit">
    <text evidence="1">Forms a cylinder of 14 subunits composed of two heptameric rings stacked back-to-back. Interacts with the co-chaperonin GroES.</text>
</comment>
<comment type="subcellular location">
    <subcellularLocation>
        <location evidence="1">Cytoplasm</location>
    </subcellularLocation>
</comment>
<comment type="similarity">
    <text evidence="1 2">Belongs to the chaperonin (HSP60) family.</text>
</comment>
<proteinExistence type="inferred from homology"/>
<organism>
    <name type="scientific">Bradyrhizobium diazoefficiens (strain JCM 10833 / BCRC 13528 / IAM 13628 / NBRC 14792 / USDA 110)</name>
    <dbReference type="NCBI Taxonomy" id="224911"/>
    <lineage>
        <taxon>Bacteria</taxon>
        <taxon>Pseudomonadati</taxon>
        <taxon>Pseudomonadota</taxon>
        <taxon>Alphaproteobacteria</taxon>
        <taxon>Hyphomicrobiales</taxon>
        <taxon>Nitrobacteraceae</taxon>
        <taxon>Bradyrhizobium</taxon>
    </lineage>
</organism>
<feature type="chain" id="PRO_0000063297" description="Chaperonin GroEL 4">
    <location>
        <begin position="1"/>
        <end position="543"/>
    </location>
</feature>
<feature type="binding site" evidence="1">
    <location>
        <begin position="29"/>
        <end position="32"/>
    </location>
    <ligand>
        <name>ATP</name>
        <dbReference type="ChEBI" id="CHEBI:30616"/>
    </ligand>
</feature>
<feature type="binding site" evidence="1">
    <location>
        <begin position="86"/>
        <end position="90"/>
    </location>
    <ligand>
        <name>ATP</name>
        <dbReference type="ChEBI" id="CHEBI:30616"/>
    </ligand>
</feature>
<feature type="binding site" evidence="1">
    <location>
        <position position="411"/>
    </location>
    <ligand>
        <name>ATP</name>
        <dbReference type="ChEBI" id="CHEBI:30616"/>
    </ligand>
</feature>
<feature type="binding site" evidence="1">
    <location>
        <begin position="476"/>
        <end position="478"/>
    </location>
    <ligand>
        <name>ATP</name>
        <dbReference type="ChEBI" id="CHEBI:30616"/>
    </ligand>
</feature>
<feature type="binding site" evidence="1">
    <location>
        <position position="492"/>
    </location>
    <ligand>
        <name>ATP</name>
        <dbReference type="ChEBI" id="CHEBI:30616"/>
    </ligand>
</feature>